<feature type="chain" id="PRO_0000358583" description="NAD(P)H-quinone oxidoreductase subunit K, chloroplastic">
    <location>
        <begin position="1"/>
        <end position="227"/>
    </location>
</feature>
<feature type="binding site" evidence="1">
    <location>
        <position position="43"/>
    </location>
    <ligand>
        <name>[4Fe-4S] cluster</name>
        <dbReference type="ChEBI" id="CHEBI:49883"/>
    </ligand>
</feature>
<feature type="binding site" evidence="1">
    <location>
        <position position="44"/>
    </location>
    <ligand>
        <name>[4Fe-4S] cluster</name>
        <dbReference type="ChEBI" id="CHEBI:49883"/>
    </ligand>
</feature>
<feature type="binding site" evidence="1">
    <location>
        <position position="108"/>
    </location>
    <ligand>
        <name>[4Fe-4S] cluster</name>
        <dbReference type="ChEBI" id="CHEBI:49883"/>
    </ligand>
</feature>
<feature type="binding site" evidence="1">
    <location>
        <position position="139"/>
    </location>
    <ligand>
        <name>[4Fe-4S] cluster</name>
        <dbReference type="ChEBI" id="CHEBI:49883"/>
    </ligand>
</feature>
<sequence length="227" mass="25481">MSLIEFPLLDQTSSNSVISTTPNDLSNWSRLSSLWPLLYGTSCCFIEFASLIGSRFDFDRYGLVPRSSPRQADLILTAGTVTMKMAPSLVRLYEQMPEPKYVIAMGACTITGGMFSTDSYSTVRGVDKLIPVDVYLPGCPPKPEAVIDALTKLRKKIAREIIEDRTLCQSQKKNRSFTTRHKLYVRRSTHTGTYEQELLYQSPSTLDISSETFFKSKSSVSSYKLVN</sequence>
<name>NDHK_SORBI</name>
<geneLocation type="chloroplast"/>
<accession>A1E9S8</accession>
<protein>
    <recommendedName>
        <fullName evidence="1">NAD(P)H-quinone oxidoreductase subunit K, chloroplastic</fullName>
        <ecNumber evidence="1">7.1.1.-</ecNumber>
    </recommendedName>
    <alternativeName>
        <fullName evidence="1">NAD(P)H dehydrogenase subunit K</fullName>
    </alternativeName>
    <alternativeName>
        <fullName evidence="1">NADH-plastoquinone oxidoreductase subunit K</fullName>
    </alternativeName>
</protein>
<gene>
    <name evidence="1" type="primary">ndhK</name>
</gene>
<keyword id="KW-0004">4Fe-4S</keyword>
<keyword id="KW-0150">Chloroplast</keyword>
<keyword id="KW-0408">Iron</keyword>
<keyword id="KW-0411">Iron-sulfur</keyword>
<keyword id="KW-0472">Membrane</keyword>
<keyword id="KW-0479">Metal-binding</keyword>
<keyword id="KW-0520">NAD</keyword>
<keyword id="KW-0521">NADP</keyword>
<keyword id="KW-0934">Plastid</keyword>
<keyword id="KW-0618">Plastoquinone</keyword>
<keyword id="KW-0874">Quinone</keyword>
<keyword id="KW-1185">Reference proteome</keyword>
<keyword id="KW-0793">Thylakoid</keyword>
<keyword id="KW-1278">Translocase</keyword>
<keyword id="KW-0813">Transport</keyword>
<comment type="function">
    <text evidence="1">NDH shuttles electrons from NAD(P)H:plastoquinone, via FMN and iron-sulfur (Fe-S) centers, to quinones in the photosynthetic chain and possibly in a chloroplast respiratory chain. The immediate electron acceptor for the enzyme in this species is believed to be plastoquinone. Couples the redox reaction to proton translocation, and thus conserves the redox energy in a proton gradient.</text>
</comment>
<comment type="catalytic activity">
    <reaction evidence="1">
        <text>a plastoquinone + NADH + (n+1) H(+)(in) = a plastoquinol + NAD(+) + n H(+)(out)</text>
        <dbReference type="Rhea" id="RHEA:42608"/>
        <dbReference type="Rhea" id="RHEA-COMP:9561"/>
        <dbReference type="Rhea" id="RHEA-COMP:9562"/>
        <dbReference type="ChEBI" id="CHEBI:15378"/>
        <dbReference type="ChEBI" id="CHEBI:17757"/>
        <dbReference type="ChEBI" id="CHEBI:57540"/>
        <dbReference type="ChEBI" id="CHEBI:57945"/>
        <dbReference type="ChEBI" id="CHEBI:62192"/>
    </reaction>
</comment>
<comment type="catalytic activity">
    <reaction evidence="1">
        <text>a plastoquinone + NADPH + (n+1) H(+)(in) = a plastoquinol + NADP(+) + n H(+)(out)</text>
        <dbReference type="Rhea" id="RHEA:42612"/>
        <dbReference type="Rhea" id="RHEA-COMP:9561"/>
        <dbReference type="Rhea" id="RHEA-COMP:9562"/>
        <dbReference type="ChEBI" id="CHEBI:15378"/>
        <dbReference type="ChEBI" id="CHEBI:17757"/>
        <dbReference type="ChEBI" id="CHEBI:57783"/>
        <dbReference type="ChEBI" id="CHEBI:58349"/>
        <dbReference type="ChEBI" id="CHEBI:62192"/>
    </reaction>
</comment>
<comment type="cofactor">
    <cofactor evidence="1">
        <name>[4Fe-4S] cluster</name>
        <dbReference type="ChEBI" id="CHEBI:49883"/>
    </cofactor>
    <text evidence="1">Binds 1 [4Fe-4S] cluster.</text>
</comment>
<comment type="subunit">
    <text evidence="1">NDH is composed of at least 16 different subunits, 5 of which are encoded in the nucleus.</text>
</comment>
<comment type="subcellular location">
    <subcellularLocation>
        <location evidence="1">Plastid</location>
        <location evidence="1">Chloroplast thylakoid membrane</location>
        <topology evidence="1">Peripheral membrane protein</topology>
        <orientation evidence="1">Stromal side</orientation>
    </subcellularLocation>
</comment>
<comment type="similarity">
    <text evidence="1">Belongs to the complex I 20 kDa subunit family.</text>
</comment>
<comment type="sequence caution" evidence="2">
    <conflict type="erroneous initiation">
        <sequence resource="EMBL-CDS" id="ABK79500"/>
    </conflict>
</comment>
<organism>
    <name type="scientific">Sorghum bicolor</name>
    <name type="common">Sorghum</name>
    <name type="synonym">Sorghum vulgare</name>
    <dbReference type="NCBI Taxonomy" id="4558"/>
    <lineage>
        <taxon>Eukaryota</taxon>
        <taxon>Viridiplantae</taxon>
        <taxon>Streptophyta</taxon>
        <taxon>Embryophyta</taxon>
        <taxon>Tracheophyta</taxon>
        <taxon>Spermatophyta</taxon>
        <taxon>Magnoliopsida</taxon>
        <taxon>Liliopsida</taxon>
        <taxon>Poales</taxon>
        <taxon>Poaceae</taxon>
        <taxon>PACMAD clade</taxon>
        <taxon>Panicoideae</taxon>
        <taxon>Andropogonodae</taxon>
        <taxon>Andropogoneae</taxon>
        <taxon>Sorghinae</taxon>
        <taxon>Sorghum</taxon>
    </lineage>
</organism>
<proteinExistence type="inferred from homology"/>
<reference key="1">
    <citation type="journal article" date="2007" name="Theor. Appl. Genet.">
        <title>Complete chloroplast genome sequences of Hordeum vulgare, Sorghum bicolor and Agrostis stolonifera, and comparative analyses with other grass genomes.</title>
        <authorList>
            <person name="Saski C."/>
            <person name="Lee S.-B."/>
            <person name="Fjellheim S."/>
            <person name="Guda C."/>
            <person name="Jansen R.K."/>
            <person name="Luo H."/>
            <person name="Tomkins J."/>
            <person name="Rognli O.A."/>
            <person name="Daniell H."/>
            <person name="Clarke J.L."/>
        </authorList>
    </citation>
    <scope>NUCLEOTIDE SEQUENCE [LARGE SCALE GENOMIC DNA]</scope>
    <source>
        <strain>cv. BTx623</strain>
    </source>
</reference>
<dbReference type="EC" id="7.1.1.-" evidence="1"/>
<dbReference type="EMBL" id="EF115542">
    <property type="protein sequence ID" value="ABK79500.1"/>
    <property type="status" value="ALT_INIT"/>
    <property type="molecule type" value="Genomic_DNA"/>
</dbReference>
<dbReference type="RefSeq" id="XP_002457909.1">
    <property type="nucleotide sequence ID" value="XM_002457864.1"/>
</dbReference>
<dbReference type="RefSeq" id="YP_899411.2">
    <property type="nucleotide sequence ID" value="NC_008602.1"/>
</dbReference>
<dbReference type="SMR" id="A1E9S8"/>
<dbReference type="FunCoup" id="A1E9S8">
    <property type="interactions" value="57"/>
</dbReference>
<dbReference type="STRING" id="4558.A1E9S8"/>
<dbReference type="EnsemblPlants" id="EES03029">
    <property type="protein sequence ID" value="EES03029"/>
    <property type="gene ID" value="SORBI_3003G172966"/>
</dbReference>
<dbReference type="GeneID" id="4549197"/>
<dbReference type="Gramene" id="EES03029">
    <property type="protein sequence ID" value="EES03029"/>
    <property type="gene ID" value="SORBI_3003G172966"/>
</dbReference>
<dbReference type="KEGG" id="sbi:4549197"/>
<dbReference type="eggNOG" id="KOG1687">
    <property type="taxonomic scope" value="Eukaryota"/>
</dbReference>
<dbReference type="HOGENOM" id="CLU_055737_2_1_1"/>
<dbReference type="InParanoid" id="A1E9S8"/>
<dbReference type="OMA" id="IMIKDYY"/>
<dbReference type="OrthoDB" id="772270at2759"/>
<dbReference type="Proteomes" id="UP000000768">
    <property type="component" value="Chloroplast"/>
</dbReference>
<dbReference type="ExpressionAtlas" id="A1E9S8">
    <property type="expression patterns" value="baseline"/>
</dbReference>
<dbReference type="GO" id="GO:0009535">
    <property type="term" value="C:chloroplast thylakoid membrane"/>
    <property type="evidence" value="ECO:0007669"/>
    <property type="project" value="UniProtKB-SubCell"/>
</dbReference>
<dbReference type="GO" id="GO:0045271">
    <property type="term" value="C:respiratory chain complex I"/>
    <property type="evidence" value="ECO:0000318"/>
    <property type="project" value="GO_Central"/>
</dbReference>
<dbReference type="GO" id="GO:0051539">
    <property type="term" value="F:4 iron, 4 sulfur cluster binding"/>
    <property type="evidence" value="ECO:0007669"/>
    <property type="project" value="UniProtKB-KW"/>
</dbReference>
<dbReference type="GO" id="GO:0005506">
    <property type="term" value="F:iron ion binding"/>
    <property type="evidence" value="ECO:0007669"/>
    <property type="project" value="UniProtKB-UniRule"/>
</dbReference>
<dbReference type="GO" id="GO:0008137">
    <property type="term" value="F:NADH dehydrogenase (ubiquinone) activity"/>
    <property type="evidence" value="ECO:0000318"/>
    <property type="project" value="GO_Central"/>
</dbReference>
<dbReference type="GO" id="GO:0048038">
    <property type="term" value="F:quinone binding"/>
    <property type="evidence" value="ECO:0007669"/>
    <property type="project" value="UniProtKB-KW"/>
</dbReference>
<dbReference type="GO" id="GO:0009060">
    <property type="term" value="P:aerobic respiration"/>
    <property type="evidence" value="ECO:0000318"/>
    <property type="project" value="GO_Central"/>
</dbReference>
<dbReference type="GO" id="GO:0015990">
    <property type="term" value="P:electron transport coupled proton transport"/>
    <property type="evidence" value="ECO:0000318"/>
    <property type="project" value="GO_Central"/>
</dbReference>
<dbReference type="GO" id="GO:0019684">
    <property type="term" value="P:photosynthesis, light reaction"/>
    <property type="evidence" value="ECO:0007669"/>
    <property type="project" value="UniProtKB-UniRule"/>
</dbReference>
<dbReference type="FunFam" id="3.40.50.12280:FF:000003">
    <property type="entry name" value="NAD(P)H-quinone oxidoreductase subunit K, chloroplastic"/>
    <property type="match status" value="1"/>
</dbReference>
<dbReference type="Gene3D" id="3.40.50.12280">
    <property type="match status" value="1"/>
</dbReference>
<dbReference type="HAMAP" id="MF_01356">
    <property type="entry name" value="NDH1_NuoB"/>
    <property type="match status" value="1"/>
</dbReference>
<dbReference type="InterPro" id="IPR006137">
    <property type="entry name" value="NADH_UbQ_OxRdtase-like_20kDa"/>
</dbReference>
<dbReference type="InterPro" id="IPR006138">
    <property type="entry name" value="NADH_UQ_OxRdtase_20Kd_su"/>
</dbReference>
<dbReference type="NCBIfam" id="TIGR01957">
    <property type="entry name" value="nuoB_fam"/>
    <property type="match status" value="1"/>
</dbReference>
<dbReference type="NCBIfam" id="NF005012">
    <property type="entry name" value="PRK06411.1"/>
    <property type="match status" value="1"/>
</dbReference>
<dbReference type="PANTHER" id="PTHR11995">
    <property type="entry name" value="NADH DEHYDROGENASE"/>
    <property type="match status" value="1"/>
</dbReference>
<dbReference type="PANTHER" id="PTHR11995:SF14">
    <property type="entry name" value="NADH DEHYDROGENASE [UBIQUINONE] IRON-SULFUR PROTEIN 7, MITOCHONDRIAL"/>
    <property type="match status" value="1"/>
</dbReference>
<dbReference type="Pfam" id="PF01058">
    <property type="entry name" value="Oxidored_q6"/>
    <property type="match status" value="1"/>
</dbReference>
<dbReference type="SUPFAM" id="SSF56770">
    <property type="entry name" value="HydA/Nqo6-like"/>
    <property type="match status" value="1"/>
</dbReference>
<dbReference type="PROSITE" id="PS01150">
    <property type="entry name" value="COMPLEX1_20K"/>
    <property type="match status" value="1"/>
</dbReference>
<evidence type="ECO:0000255" key="1">
    <source>
        <dbReference type="HAMAP-Rule" id="MF_01356"/>
    </source>
</evidence>
<evidence type="ECO:0000305" key="2"/>